<name>G5P_BPIF1</name>
<keyword id="KW-0903">Direct protein sequencing</keyword>
<keyword id="KW-0235">DNA replication</keyword>
<keyword id="KW-0238">DNA-binding</keyword>
<keyword id="KW-1185">Reference proteome</keyword>
<reference key="1">
    <citation type="submission" date="1993-10" db="EMBL/GenBank/DDBJ databases">
        <title>DNA sequence of the filamentous coliphage If1.</title>
        <authorList>
            <person name="Hill D.F."/>
            <person name="Hughes G."/>
            <person name="McNaughton J.C."/>
            <person name="Stockwell P.A."/>
            <person name="Petersen G.B."/>
        </authorList>
    </citation>
    <scope>NUCLEOTIDE SEQUENCE [GENOMIC DNA]</scope>
</reference>
<reference key="2">
    <citation type="journal article" date="1991" name="Proc. R. Soc. B">
        <title>The putative single-stranded DNA-binding protein of the filamentous bacteriophage, If1. Amino acid sequence of the protein and structure of the gene.</title>
        <authorList>
            <person name="Carne A."/>
            <person name="Hill D.F."/>
            <person name="Stockwell P.A."/>
            <person name="Hughes G."/>
            <person name="Petersen G.B."/>
        </authorList>
    </citation>
    <scope>PROTEIN SEQUENCE OF 2-96</scope>
</reference>
<dbReference type="EMBL" id="U02303">
    <property type="protein sequence ID" value="AAC62151.1"/>
    <property type="molecule type" value="Genomic_DNA"/>
</dbReference>
<dbReference type="RefSeq" id="NP_047352.1">
    <property type="nucleotide sequence ID" value="NC_001954.1"/>
</dbReference>
<dbReference type="KEGG" id="vg:1261851"/>
<dbReference type="Proteomes" id="UP000001833">
    <property type="component" value="Genome"/>
</dbReference>
<dbReference type="GO" id="GO:0003677">
    <property type="term" value="F:DNA binding"/>
    <property type="evidence" value="ECO:0007669"/>
    <property type="project" value="UniProtKB-KW"/>
</dbReference>
<dbReference type="GO" id="GO:0006260">
    <property type="term" value="P:DNA replication"/>
    <property type="evidence" value="ECO:0007669"/>
    <property type="project" value="UniProtKB-KW"/>
</dbReference>
<sequence length="96" mass="10714">MSELGNLETTVTGKIKRFNNGGGYYYTTVVSPAADAYSFPPVIRIKSKKSLGRVGDEIADIHCRITGYERSFPYTDKQTGEQSRGFNVDMLLELLE</sequence>
<accession>O80294</accession>
<comment type="function">
    <text evidence="1">Binds to DNA in a highly cooperative manner without pronounced sequence specificity. During synthesis of the single-stranded (progeny) viral DNA, prevents the conversion into the double-stranded replicative form. G5P is displaced by the capsid protein G8P during phage assembly on the inner bacterial membrane (By similarity).</text>
</comment>
<comment type="subunit">
    <text evidence="1">Homodimer.</text>
</comment>
<comment type="similarity">
    <text evidence="3">Belongs to the inovirus G5P protein family.</text>
</comment>
<evidence type="ECO:0000250" key="1"/>
<evidence type="ECO:0000269" key="2">
    <source>
    </source>
</evidence>
<evidence type="ECO:0000305" key="3"/>
<protein>
    <recommendedName>
        <fullName>DNA-Binding protein G5P</fullName>
        <shortName>G5P</shortName>
    </recommendedName>
    <alternativeName>
        <fullName>GPV</fullName>
    </alternativeName>
    <alternativeName>
        <fullName>Single-stranded DNA-binding protein</fullName>
    </alternativeName>
</protein>
<proteinExistence type="evidence at protein level"/>
<organismHost>
    <name type="scientific">Escherichia coli</name>
    <dbReference type="NCBI Taxonomy" id="562"/>
</organismHost>
<feature type="initiator methionine" description="Removed; by host" evidence="2">
    <location>
        <position position="1"/>
    </location>
</feature>
<feature type="chain" id="PRO_0000098198" description="DNA-Binding protein G5P">
    <location>
        <begin position="2"/>
        <end position="96"/>
    </location>
</feature>
<gene>
    <name type="primary">V</name>
    <name type="synonym">5</name>
</gene>
<organism>
    <name type="scientific">Escherichia phage If1</name>
    <name type="common">Bacteriophage If1</name>
    <dbReference type="NCBI Taxonomy" id="10868"/>
    <lineage>
        <taxon>Viruses</taxon>
        <taxon>Monodnaviria</taxon>
        <taxon>Loebvirae</taxon>
        <taxon>Hofneiviricota</taxon>
        <taxon>Faserviricetes</taxon>
        <taxon>Tubulavirales</taxon>
        <taxon>Inoviridae</taxon>
        <taxon>Infulavirus</taxon>
        <taxon>Infulavirus If1</taxon>
    </lineage>
</organism>